<keyword id="KW-0687">Ribonucleoprotein</keyword>
<keyword id="KW-0689">Ribosomal protein</keyword>
<gene>
    <name evidence="1" type="primary">rpmE2</name>
    <name type="synonym">rpmE</name>
    <name type="ordered locus">SAV2120</name>
</gene>
<accession>P66195</accession>
<accession>Q99SD8</accession>
<reference key="1">
    <citation type="journal article" date="2001" name="Lancet">
        <title>Whole genome sequencing of meticillin-resistant Staphylococcus aureus.</title>
        <authorList>
            <person name="Kuroda M."/>
            <person name="Ohta T."/>
            <person name="Uchiyama I."/>
            <person name="Baba T."/>
            <person name="Yuzawa H."/>
            <person name="Kobayashi I."/>
            <person name="Cui L."/>
            <person name="Oguchi A."/>
            <person name="Aoki K."/>
            <person name="Nagai Y."/>
            <person name="Lian J.-Q."/>
            <person name="Ito T."/>
            <person name="Kanamori M."/>
            <person name="Matsumaru H."/>
            <person name="Maruyama A."/>
            <person name="Murakami H."/>
            <person name="Hosoyama A."/>
            <person name="Mizutani-Ui Y."/>
            <person name="Takahashi N.K."/>
            <person name="Sawano T."/>
            <person name="Inoue R."/>
            <person name="Kaito C."/>
            <person name="Sekimizu K."/>
            <person name="Hirakawa H."/>
            <person name="Kuhara S."/>
            <person name="Goto S."/>
            <person name="Yabuzaki J."/>
            <person name="Kanehisa M."/>
            <person name="Yamashita A."/>
            <person name="Oshima K."/>
            <person name="Furuya K."/>
            <person name="Yoshino C."/>
            <person name="Shiba T."/>
            <person name="Hattori M."/>
            <person name="Ogasawara N."/>
            <person name="Hayashi H."/>
            <person name="Hiramatsu K."/>
        </authorList>
    </citation>
    <scope>NUCLEOTIDE SEQUENCE [LARGE SCALE GENOMIC DNA]</scope>
    <source>
        <strain>Mu50 / ATCC 700699</strain>
    </source>
</reference>
<protein>
    <recommendedName>
        <fullName evidence="1">Large ribosomal subunit protein bL31B</fullName>
    </recommendedName>
    <alternativeName>
        <fullName evidence="2">50S ribosomal protein L31 type B</fullName>
    </alternativeName>
</protein>
<proteinExistence type="inferred from homology"/>
<name>RL31B_STAAM</name>
<comment type="subunit">
    <text evidence="1">Part of the 50S ribosomal subunit.</text>
</comment>
<comment type="similarity">
    <text evidence="1">Belongs to the bacterial ribosomal protein bL31 family. Type B subfamily.</text>
</comment>
<evidence type="ECO:0000255" key="1">
    <source>
        <dbReference type="HAMAP-Rule" id="MF_00502"/>
    </source>
</evidence>
<evidence type="ECO:0000305" key="2"/>
<sequence length="84" mass="9723">MKQGIHPEYHQVIFLDTTTNFKFLSGSTKTSSEMMEWEDGKEYPVIRLDISSDSHPFYTGRQKFAAADGRVERFNKKFGLKSNN</sequence>
<organism>
    <name type="scientific">Staphylococcus aureus (strain Mu50 / ATCC 700699)</name>
    <dbReference type="NCBI Taxonomy" id="158878"/>
    <lineage>
        <taxon>Bacteria</taxon>
        <taxon>Bacillati</taxon>
        <taxon>Bacillota</taxon>
        <taxon>Bacilli</taxon>
        <taxon>Bacillales</taxon>
        <taxon>Staphylococcaceae</taxon>
        <taxon>Staphylococcus</taxon>
    </lineage>
</organism>
<feature type="chain" id="PRO_0000173256" description="Large ribosomal subunit protein bL31B">
    <location>
        <begin position="1"/>
        <end position="84"/>
    </location>
</feature>
<dbReference type="EMBL" id="BA000017">
    <property type="protein sequence ID" value="BAB58282.1"/>
    <property type="molecule type" value="Genomic_DNA"/>
</dbReference>
<dbReference type="RefSeq" id="WP_000808968.1">
    <property type="nucleotide sequence ID" value="NC_002758.2"/>
</dbReference>
<dbReference type="SMR" id="P66195"/>
<dbReference type="KEGG" id="sav:SAV2120"/>
<dbReference type="HOGENOM" id="CLU_114306_2_2_9"/>
<dbReference type="PhylomeDB" id="P66195"/>
<dbReference type="Proteomes" id="UP000002481">
    <property type="component" value="Chromosome"/>
</dbReference>
<dbReference type="GO" id="GO:1990904">
    <property type="term" value="C:ribonucleoprotein complex"/>
    <property type="evidence" value="ECO:0007669"/>
    <property type="project" value="UniProtKB-KW"/>
</dbReference>
<dbReference type="GO" id="GO:0005840">
    <property type="term" value="C:ribosome"/>
    <property type="evidence" value="ECO:0007669"/>
    <property type="project" value="UniProtKB-KW"/>
</dbReference>
<dbReference type="GO" id="GO:0003735">
    <property type="term" value="F:structural constituent of ribosome"/>
    <property type="evidence" value="ECO:0007669"/>
    <property type="project" value="InterPro"/>
</dbReference>
<dbReference type="GO" id="GO:0006412">
    <property type="term" value="P:translation"/>
    <property type="evidence" value="ECO:0007669"/>
    <property type="project" value="UniProtKB-UniRule"/>
</dbReference>
<dbReference type="Gene3D" id="4.10.830.30">
    <property type="entry name" value="Ribosomal protein L31"/>
    <property type="match status" value="1"/>
</dbReference>
<dbReference type="HAMAP" id="MF_00502">
    <property type="entry name" value="Ribosomal_bL31_2"/>
    <property type="match status" value="1"/>
</dbReference>
<dbReference type="InterPro" id="IPR034704">
    <property type="entry name" value="Ribosomal_bL28/bL31-like_sf"/>
</dbReference>
<dbReference type="InterPro" id="IPR002150">
    <property type="entry name" value="Ribosomal_bL31"/>
</dbReference>
<dbReference type="InterPro" id="IPR027493">
    <property type="entry name" value="Ribosomal_bL31_B"/>
</dbReference>
<dbReference type="InterPro" id="IPR042105">
    <property type="entry name" value="Ribosomal_bL31_sf"/>
</dbReference>
<dbReference type="NCBIfam" id="TIGR00105">
    <property type="entry name" value="L31"/>
    <property type="match status" value="1"/>
</dbReference>
<dbReference type="NCBIfam" id="NF002462">
    <property type="entry name" value="PRK01678.1"/>
    <property type="match status" value="1"/>
</dbReference>
<dbReference type="PANTHER" id="PTHR33280">
    <property type="entry name" value="50S RIBOSOMAL PROTEIN L31, CHLOROPLASTIC"/>
    <property type="match status" value="1"/>
</dbReference>
<dbReference type="PANTHER" id="PTHR33280:SF1">
    <property type="entry name" value="LARGE RIBOSOMAL SUBUNIT PROTEIN BL31C"/>
    <property type="match status" value="1"/>
</dbReference>
<dbReference type="Pfam" id="PF01197">
    <property type="entry name" value="Ribosomal_L31"/>
    <property type="match status" value="1"/>
</dbReference>
<dbReference type="PRINTS" id="PR01249">
    <property type="entry name" value="RIBOSOMALL31"/>
</dbReference>
<dbReference type="SUPFAM" id="SSF143800">
    <property type="entry name" value="L28p-like"/>
    <property type="match status" value="1"/>
</dbReference>
<dbReference type="PROSITE" id="PS01143">
    <property type="entry name" value="RIBOSOMAL_L31"/>
    <property type="match status" value="1"/>
</dbReference>